<accession>Q5DYV8</accession>
<name>DEOD3_ALIF1</name>
<keyword id="KW-0002">3D-structure</keyword>
<keyword id="KW-0328">Glycosyltransferase</keyword>
<keyword id="KW-1185">Reference proteome</keyword>
<keyword id="KW-0808">Transferase</keyword>
<feature type="chain" id="PRO_0000063173" description="Purine nucleoside phosphorylase DeoD-type">
    <location>
        <begin position="1"/>
        <end position="239"/>
    </location>
</feature>
<feature type="active site" description="Proton donor" evidence="2">
    <location>
        <position position="205"/>
    </location>
</feature>
<feature type="binding site" evidence="1">
    <location>
        <position position="5"/>
    </location>
    <ligand>
        <name>a purine D-ribonucleoside</name>
        <dbReference type="ChEBI" id="CHEBI:142355"/>
        <note>ligand shared between dimeric partners</note>
    </ligand>
</feature>
<feature type="binding site" description="in other chain" evidence="1">
    <location>
        <position position="21"/>
    </location>
    <ligand>
        <name>phosphate</name>
        <dbReference type="ChEBI" id="CHEBI:43474"/>
        <note>ligand shared between dimeric partners</note>
    </ligand>
</feature>
<feature type="binding site" description="in other chain" evidence="1">
    <location>
        <position position="25"/>
    </location>
    <ligand>
        <name>phosphate</name>
        <dbReference type="ChEBI" id="CHEBI:43474"/>
        <note>ligand shared between dimeric partners</note>
    </ligand>
</feature>
<feature type="binding site" evidence="1">
    <location>
        <position position="44"/>
    </location>
    <ligand>
        <name>phosphate</name>
        <dbReference type="ChEBI" id="CHEBI:43474"/>
        <note>ligand shared between dimeric partners</note>
    </ligand>
</feature>
<feature type="binding site" description="in other chain" evidence="1">
    <location>
        <begin position="88"/>
        <end position="91"/>
    </location>
    <ligand>
        <name>phosphate</name>
        <dbReference type="ChEBI" id="CHEBI:43474"/>
        <note>ligand shared between dimeric partners</note>
    </ligand>
</feature>
<feature type="binding site" description="in other chain" evidence="1">
    <location>
        <begin position="180"/>
        <end position="182"/>
    </location>
    <ligand>
        <name>a purine D-ribonucleoside</name>
        <dbReference type="ChEBI" id="CHEBI:142355"/>
        <note>ligand shared between dimeric partners</note>
    </ligand>
</feature>
<feature type="binding site" description="in other chain" evidence="1">
    <location>
        <begin position="204"/>
        <end position="205"/>
    </location>
    <ligand>
        <name>a purine D-ribonucleoside</name>
        <dbReference type="ChEBI" id="CHEBI:142355"/>
        <note>ligand shared between dimeric partners</note>
    </ligand>
</feature>
<feature type="site" description="Important for catalytic activity" evidence="2">
    <location>
        <position position="218"/>
    </location>
</feature>
<feature type="strand" evidence="3">
    <location>
        <begin position="15"/>
        <end position="19"/>
    </location>
</feature>
<feature type="helix" evidence="3">
    <location>
        <begin position="23"/>
        <end position="33"/>
    </location>
</feature>
<feature type="strand" evidence="3">
    <location>
        <begin position="35"/>
        <end position="41"/>
    </location>
</feature>
<feature type="helix" evidence="3">
    <location>
        <begin position="43"/>
        <end position="45"/>
    </location>
</feature>
<feature type="strand" evidence="3">
    <location>
        <begin position="48"/>
        <end position="53"/>
    </location>
</feature>
<feature type="strand" evidence="3">
    <location>
        <begin position="56"/>
        <end position="61"/>
    </location>
</feature>
<feature type="helix" evidence="3">
    <location>
        <begin position="67"/>
        <end position="78"/>
    </location>
</feature>
<feature type="turn" evidence="3">
    <location>
        <begin position="79"/>
        <end position="81"/>
    </location>
</feature>
<feature type="strand" evidence="3">
    <location>
        <begin position="85"/>
        <end position="94"/>
    </location>
</feature>
<feature type="strand" evidence="3">
    <location>
        <begin position="104"/>
        <end position="112"/>
    </location>
</feature>
<feature type="helix" evidence="3">
    <location>
        <begin position="116"/>
        <end position="120"/>
    </location>
</feature>
<feature type="turn" evidence="3">
    <location>
        <begin position="121"/>
        <end position="123"/>
    </location>
</feature>
<feature type="helix" evidence="3">
    <location>
        <begin position="132"/>
        <end position="143"/>
    </location>
</feature>
<feature type="strand" evidence="3">
    <location>
        <begin position="149"/>
        <end position="156"/>
    </location>
</feature>
<feature type="helix" evidence="3">
    <location>
        <begin position="166"/>
        <end position="173"/>
    </location>
</feature>
<feature type="strand" evidence="3">
    <location>
        <begin position="178"/>
        <end position="182"/>
    </location>
</feature>
<feature type="helix" evidence="3">
    <location>
        <begin position="183"/>
        <end position="193"/>
    </location>
</feature>
<feature type="strand" evidence="3">
    <location>
        <begin position="196"/>
        <end position="206"/>
    </location>
</feature>
<feature type="turn" evidence="3">
    <location>
        <begin position="207"/>
        <end position="210"/>
    </location>
</feature>
<feature type="helix" evidence="3">
    <location>
        <begin position="215"/>
        <end position="235"/>
    </location>
</feature>
<sequence length="239" mass="26542">MSTPHINAPLDAFADTILMPGDPLRAKLIAETYLENVVQVTDVRGMLGFTGEFKGRKISVMGHGMGAPSASIYFHELMTTYKVKNFIRIGSCGAIHDDVKLKDLIVAIGASTDSKMNRIRFKDNDFAATANYNMLSECVNTLKTTDINYLVGNVFSSDLFYRPDEEQYDMMARYGILGVEMEVNALYSAAAENHCNAVALCTVTDHIKNHEHLTADERRTELHEMINVALDVALKLPTE</sequence>
<gene>
    <name evidence="2" type="primary">deoD3</name>
    <name type="ordered locus">VF_A0968</name>
</gene>
<dbReference type="EC" id="2.4.2.1" evidence="2"/>
<dbReference type="EMBL" id="CP000021">
    <property type="protein sequence ID" value="AAW88038.1"/>
    <property type="molecule type" value="Genomic_DNA"/>
</dbReference>
<dbReference type="RefSeq" id="YP_206926.1">
    <property type="nucleotide sequence ID" value="NC_006841.2"/>
</dbReference>
<dbReference type="PDB" id="4LDN">
    <property type="method" value="X-ray"/>
    <property type="resolution" value="1.48 A"/>
    <property type="chains" value="A=1-239"/>
</dbReference>
<dbReference type="PDBsum" id="4LDN"/>
<dbReference type="SMR" id="Q5DYV8"/>
<dbReference type="STRING" id="312309.VF_A0968"/>
<dbReference type="EnsemblBacteria" id="AAW88038">
    <property type="protein sequence ID" value="AAW88038"/>
    <property type="gene ID" value="VF_A0968"/>
</dbReference>
<dbReference type="GeneID" id="54166286"/>
<dbReference type="KEGG" id="vfi:VF_A0968"/>
<dbReference type="PATRIC" id="fig|312309.11.peg.3569"/>
<dbReference type="eggNOG" id="COG0813">
    <property type="taxonomic scope" value="Bacteria"/>
</dbReference>
<dbReference type="HOGENOM" id="CLU_068457_2_0_6"/>
<dbReference type="OrthoDB" id="9782889at2"/>
<dbReference type="EvolutionaryTrace" id="Q5DYV8"/>
<dbReference type="Proteomes" id="UP000000537">
    <property type="component" value="Chromosome II"/>
</dbReference>
<dbReference type="GO" id="GO:0005829">
    <property type="term" value="C:cytosol"/>
    <property type="evidence" value="ECO:0007669"/>
    <property type="project" value="TreeGrafter"/>
</dbReference>
<dbReference type="GO" id="GO:0004731">
    <property type="term" value="F:purine-nucleoside phosphorylase activity"/>
    <property type="evidence" value="ECO:0007669"/>
    <property type="project" value="UniProtKB-UniRule"/>
</dbReference>
<dbReference type="GO" id="GO:0006152">
    <property type="term" value="P:purine nucleoside catabolic process"/>
    <property type="evidence" value="ECO:0007669"/>
    <property type="project" value="TreeGrafter"/>
</dbReference>
<dbReference type="CDD" id="cd09006">
    <property type="entry name" value="PNP_EcPNPI-like"/>
    <property type="match status" value="1"/>
</dbReference>
<dbReference type="Gene3D" id="3.40.50.1580">
    <property type="entry name" value="Nucleoside phosphorylase domain"/>
    <property type="match status" value="1"/>
</dbReference>
<dbReference type="HAMAP" id="MF_01627">
    <property type="entry name" value="Pur_nucleosid_phosp"/>
    <property type="match status" value="1"/>
</dbReference>
<dbReference type="InterPro" id="IPR004402">
    <property type="entry name" value="DeoD-type"/>
</dbReference>
<dbReference type="InterPro" id="IPR018016">
    <property type="entry name" value="Nucleoside_phosphorylase_CS"/>
</dbReference>
<dbReference type="InterPro" id="IPR000845">
    <property type="entry name" value="Nucleoside_phosphorylase_d"/>
</dbReference>
<dbReference type="InterPro" id="IPR035994">
    <property type="entry name" value="Nucleoside_phosphorylase_sf"/>
</dbReference>
<dbReference type="NCBIfam" id="TIGR00107">
    <property type="entry name" value="deoD"/>
    <property type="match status" value="1"/>
</dbReference>
<dbReference type="NCBIfam" id="NF004489">
    <property type="entry name" value="PRK05819.1"/>
    <property type="match status" value="1"/>
</dbReference>
<dbReference type="NCBIfam" id="NF009914">
    <property type="entry name" value="PRK13374.1"/>
    <property type="match status" value="1"/>
</dbReference>
<dbReference type="PANTHER" id="PTHR43691:SF11">
    <property type="entry name" value="FI09636P-RELATED"/>
    <property type="match status" value="1"/>
</dbReference>
<dbReference type="PANTHER" id="PTHR43691">
    <property type="entry name" value="URIDINE PHOSPHORYLASE"/>
    <property type="match status" value="1"/>
</dbReference>
<dbReference type="Pfam" id="PF01048">
    <property type="entry name" value="PNP_UDP_1"/>
    <property type="match status" value="1"/>
</dbReference>
<dbReference type="SUPFAM" id="SSF53167">
    <property type="entry name" value="Purine and uridine phosphorylases"/>
    <property type="match status" value="1"/>
</dbReference>
<dbReference type="PROSITE" id="PS01232">
    <property type="entry name" value="PNP_UDP_1"/>
    <property type="match status" value="1"/>
</dbReference>
<comment type="function">
    <text evidence="2">Catalyzes the reversible phosphorolytic breakdown of the N-glycosidic bond in the beta-(deoxy)ribonucleoside molecules, with the formation of the corresponding free purine bases and pentose-1-phosphate.</text>
</comment>
<comment type="catalytic activity">
    <reaction evidence="2">
        <text>a purine D-ribonucleoside + phosphate = a purine nucleobase + alpha-D-ribose 1-phosphate</text>
        <dbReference type="Rhea" id="RHEA:19805"/>
        <dbReference type="ChEBI" id="CHEBI:26386"/>
        <dbReference type="ChEBI" id="CHEBI:43474"/>
        <dbReference type="ChEBI" id="CHEBI:57720"/>
        <dbReference type="ChEBI" id="CHEBI:142355"/>
        <dbReference type="EC" id="2.4.2.1"/>
    </reaction>
</comment>
<comment type="catalytic activity">
    <reaction evidence="2">
        <text>a purine 2'-deoxy-D-ribonucleoside + phosphate = a purine nucleobase + 2-deoxy-alpha-D-ribose 1-phosphate</text>
        <dbReference type="Rhea" id="RHEA:36431"/>
        <dbReference type="ChEBI" id="CHEBI:26386"/>
        <dbReference type="ChEBI" id="CHEBI:43474"/>
        <dbReference type="ChEBI" id="CHEBI:57259"/>
        <dbReference type="ChEBI" id="CHEBI:142361"/>
        <dbReference type="EC" id="2.4.2.1"/>
    </reaction>
</comment>
<comment type="subunit">
    <text evidence="2">Homohexamer; trimer of homodimers.</text>
</comment>
<comment type="similarity">
    <text evidence="2">Belongs to the PNP/UDP phosphorylase family.</text>
</comment>
<organism>
    <name type="scientific">Aliivibrio fischeri (strain ATCC 700601 / ES114)</name>
    <name type="common">Vibrio fischeri</name>
    <dbReference type="NCBI Taxonomy" id="312309"/>
    <lineage>
        <taxon>Bacteria</taxon>
        <taxon>Pseudomonadati</taxon>
        <taxon>Pseudomonadota</taxon>
        <taxon>Gammaproteobacteria</taxon>
        <taxon>Vibrionales</taxon>
        <taxon>Vibrionaceae</taxon>
        <taxon>Aliivibrio</taxon>
    </lineage>
</organism>
<reference key="1">
    <citation type="journal article" date="2005" name="Proc. Natl. Acad. Sci. U.S.A.">
        <title>Complete genome sequence of Vibrio fischeri: a symbiotic bacterium with pathogenic congeners.</title>
        <authorList>
            <person name="Ruby E.G."/>
            <person name="Urbanowski M."/>
            <person name="Campbell J."/>
            <person name="Dunn A."/>
            <person name="Faini M."/>
            <person name="Gunsalus R."/>
            <person name="Lostroh P."/>
            <person name="Lupp C."/>
            <person name="McCann J."/>
            <person name="Millikan D."/>
            <person name="Schaefer A."/>
            <person name="Stabb E."/>
            <person name="Stevens A."/>
            <person name="Visick K."/>
            <person name="Whistler C."/>
            <person name="Greenberg E.P."/>
        </authorList>
    </citation>
    <scope>NUCLEOTIDE SEQUENCE [LARGE SCALE GENOMIC DNA]</scope>
    <source>
        <strain>ATCC 700601 / ES114</strain>
    </source>
</reference>
<proteinExistence type="evidence at protein level"/>
<evidence type="ECO:0000250" key="1">
    <source>
        <dbReference type="UniProtKB" id="P50389"/>
    </source>
</evidence>
<evidence type="ECO:0000255" key="2">
    <source>
        <dbReference type="HAMAP-Rule" id="MF_01627"/>
    </source>
</evidence>
<evidence type="ECO:0007829" key="3">
    <source>
        <dbReference type="PDB" id="4LDN"/>
    </source>
</evidence>
<protein>
    <recommendedName>
        <fullName evidence="2">Purine nucleoside phosphorylase DeoD-type</fullName>
        <shortName evidence="2">PNP</shortName>
        <ecNumber evidence="2">2.4.2.1</ecNumber>
    </recommendedName>
</protein>